<proteinExistence type="inferred from homology"/>
<feature type="chain" id="PRO_1000201446" description="Elongation factor G">
    <location>
        <begin position="1"/>
        <end position="692"/>
    </location>
</feature>
<feature type="domain" description="tr-type G">
    <location>
        <begin position="8"/>
        <end position="283"/>
    </location>
</feature>
<feature type="binding site" evidence="1">
    <location>
        <begin position="17"/>
        <end position="24"/>
    </location>
    <ligand>
        <name>GTP</name>
        <dbReference type="ChEBI" id="CHEBI:37565"/>
    </ligand>
</feature>
<feature type="binding site" evidence="1">
    <location>
        <begin position="81"/>
        <end position="85"/>
    </location>
    <ligand>
        <name>GTP</name>
        <dbReference type="ChEBI" id="CHEBI:37565"/>
    </ligand>
</feature>
<feature type="binding site" evidence="1">
    <location>
        <begin position="135"/>
        <end position="138"/>
    </location>
    <ligand>
        <name>GTP</name>
        <dbReference type="ChEBI" id="CHEBI:37565"/>
    </ligand>
</feature>
<organism>
    <name type="scientific">Caulobacter vibrioides (strain NA1000 / CB15N)</name>
    <name type="common">Caulobacter crescentus</name>
    <dbReference type="NCBI Taxonomy" id="565050"/>
    <lineage>
        <taxon>Bacteria</taxon>
        <taxon>Pseudomonadati</taxon>
        <taxon>Pseudomonadota</taxon>
        <taxon>Alphaproteobacteria</taxon>
        <taxon>Caulobacterales</taxon>
        <taxon>Caulobacteraceae</taxon>
        <taxon>Caulobacter</taxon>
    </lineage>
</organism>
<reference key="1">
    <citation type="journal article" date="2010" name="J. Bacteriol.">
        <title>The genetic basis of laboratory adaptation in Caulobacter crescentus.</title>
        <authorList>
            <person name="Marks M.E."/>
            <person name="Castro-Rojas C.M."/>
            <person name="Teiling C."/>
            <person name="Du L."/>
            <person name="Kapatral V."/>
            <person name="Walunas T.L."/>
            <person name="Crosson S."/>
        </authorList>
    </citation>
    <scope>NUCLEOTIDE SEQUENCE [LARGE SCALE GENOMIC DNA]</scope>
    <source>
        <strain>NA1000 / CB15N</strain>
    </source>
</reference>
<keyword id="KW-0963">Cytoplasm</keyword>
<keyword id="KW-0251">Elongation factor</keyword>
<keyword id="KW-0342">GTP-binding</keyword>
<keyword id="KW-0547">Nucleotide-binding</keyword>
<keyword id="KW-0648">Protein biosynthesis</keyword>
<keyword id="KW-1185">Reference proteome</keyword>
<sequence>MPRTHKIEDYRNFGIMAHIDAGKTTTTERILYYTGKSHKIGEVHDGAATMDWMEQEQERGITITSAATTAFWNDKRLNIIDTPGHVDFTIEVERSLRVLDGAVTVLDGNAGVEPQTETVWRQADKYKVPRIVFVNKMDKIGADFDKSVESIRDRLGAKAVPIQFPIGSESNLKGLVDLVRMKAVVWDNDGLGASYRDEEIPADLMDKAVEARAYLVENAVELDDDAMEAYLGGEEPSIETIKKCIRKAVLTGAFYPILCGSAFKNKGVQPLLDAVVDYLPSPVDIPPTKGIDFKTEEETTRKASDEEPLSVLAFKIMDDPFVGSLTFCRIYSGKMETGMSLLNSTRDKRERVGRMLLMHSNNREDIKEAYAGDIVALAGLKETRTGDTLCDPLKSPVILERMEFPAPVIEIAVEPKSKADQEKLGVALQKLAAEDPSFTVSTDFESGQTILKGMGELHLDIKIDILKRTYKVEANIGAPQVAYRESLGRKVDIDYTHKKQTGGTGQFARVMITFEPGEPGSGFVFESAIVGGAVPKEYIPGVQKGLESVKDSGLLAGFPLIDFKATLTDGKYHDVDSSVLAFEIASRAAFKELREKGAPKLLEPIMKVEVVTPEEYLGSVIGDLNSRRGMIQGQDMRGNATVVNAYVPLANMFGYVNTLRGMSQGRAQFSMVYDHYDPVPQHVADEVIKKYA</sequence>
<dbReference type="EMBL" id="CP001340">
    <property type="protein sequence ID" value="ACL96768.1"/>
    <property type="molecule type" value="Genomic_DNA"/>
</dbReference>
<dbReference type="RefSeq" id="WP_010921035.1">
    <property type="nucleotide sequence ID" value="NC_011916.1"/>
</dbReference>
<dbReference type="RefSeq" id="YP_002518676.1">
    <property type="nucleotide sequence ID" value="NC_011916.1"/>
</dbReference>
<dbReference type="SMR" id="B8H414"/>
<dbReference type="GeneID" id="7330326"/>
<dbReference type="KEGG" id="ccs:CCNA_03304"/>
<dbReference type="PATRIC" id="fig|565050.3.peg.3222"/>
<dbReference type="HOGENOM" id="CLU_002794_4_1_5"/>
<dbReference type="OrthoDB" id="9802948at2"/>
<dbReference type="PhylomeDB" id="B8H414"/>
<dbReference type="Proteomes" id="UP000001364">
    <property type="component" value="Chromosome"/>
</dbReference>
<dbReference type="GO" id="GO:0005737">
    <property type="term" value="C:cytoplasm"/>
    <property type="evidence" value="ECO:0007669"/>
    <property type="project" value="UniProtKB-SubCell"/>
</dbReference>
<dbReference type="GO" id="GO:0005525">
    <property type="term" value="F:GTP binding"/>
    <property type="evidence" value="ECO:0007669"/>
    <property type="project" value="UniProtKB-UniRule"/>
</dbReference>
<dbReference type="GO" id="GO:0003924">
    <property type="term" value="F:GTPase activity"/>
    <property type="evidence" value="ECO:0007669"/>
    <property type="project" value="InterPro"/>
</dbReference>
<dbReference type="GO" id="GO:0003746">
    <property type="term" value="F:translation elongation factor activity"/>
    <property type="evidence" value="ECO:0007669"/>
    <property type="project" value="UniProtKB-UniRule"/>
</dbReference>
<dbReference type="GO" id="GO:0032790">
    <property type="term" value="P:ribosome disassembly"/>
    <property type="evidence" value="ECO:0007669"/>
    <property type="project" value="TreeGrafter"/>
</dbReference>
<dbReference type="CDD" id="cd01886">
    <property type="entry name" value="EF-G"/>
    <property type="match status" value="1"/>
</dbReference>
<dbReference type="CDD" id="cd16262">
    <property type="entry name" value="EFG_III"/>
    <property type="match status" value="1"/>
</dbReference>
<dbReference type="CDD" id="cd01434">
    <property type="entry name" value="EFG_mtEFG1_IV"/>
    <property type="match status" value="1"/>
</dbReference>
<dbReference type="CDD" id="cd03713">
    <property type="entry name" value="EFG_mtEFG_C"/>
    <property type="match status" value="1"/>
</dbReference>
<dbReference type="CDD" id="cd04088">
    <property type="entry name" value="EFG_mtEFG_II"/>
    <property type="match status" value="1"/>
</dbReference>
<dbReference type="FunFam" id="2.40.30.10:FF:000006">
    <property type="entry name" value="Elongation factor G"/>
    <property type="match status" value="1"/>
</dbReference>
<dbReference type="FunFam" id="3.30.230.10:FF:000003">
    <property type="entry name" value="Elongation factor G"/>
    <property type="match status" value="1"/>
</dbReference>
<dbReference type="FunFam" id="3.30.70.240:FF:000001">
    <property type="entry name" value="Elongation factor G"/>
    <property type="match status" value="1"/>
</dbReference>
<dbReference type="FunFam" id="3.30.70.870:FF:000001">
    <property type="entry name" value="Elongation factor G"/>
    <property type="match status" value="1"/>
</dbReference>
<dbReference type="FunFam" id="3.40.50.300:FF:000029">
    <property type="entry name" value="Elongation factor G"/>
    <property type="match status" value="1"/>
</dbReference>
<dbReference type="Gene3D" id="3.30.230.10">
    <property type="match status" value="1"/>
</dbReference>
<dbReference type="Gene3D" id="3.30.70.240">
    <property type="match status" value="1"/>
</dbReference>
<dbReference type="Gene3D" id="3.30.70.870">
    <property type="entry name" value="Elongation Factor G (Translational Gtpase), domain 3"/>
    <property type="match status" value="1"/>
</dbReference>
<dbReference type="Gene3D" id="3.40.50.300">
    <property type="entry name" value="P-loop containing nucleotide triphosphate hydrolases"/>
    <property type="match status" value="1"/>
</dbReference>
<dbReference type="Gene3D" id="2.40.30.10">
    <property type="entry name" value="Translation factors"/>
    <property type="match status" value="1"/>
</dbReference>
<dbReference type="HAMAP" id="MF_00054_B">
    <property type="entry name" value="EF_G_EF_2_B"/>
    <property type="match status" value="1"/>
</dbReference>
<dbReference type="InterPro" id="IPR053905">
    <property type="entry name" value="EF-G-like_DII"/>
</dbReference>
<dbReference type="InterPro" id="IPR041095">
    <property type="entry name" value="EFG_II"/>
</dbReference>
<dbReference type="InterPro" id="IPR009022">
    <property type="entry name" value="EFG_III"/>
</dbReference>
<dbReference type="InterPro" id="IPR035647">
    <property type="entry name" value="EFG_III/V"/>
</dbReference>
<dbReference type="InterPro" id="IPR047872">
    <property type="entry name" value="EFG_IV"/>
</dbReference>
<dbReference type="InterPro" id="IPR035649">
    <property type="entry name" value="EFG_V"/>
</dbReference>
<dbReference type="InterPro" id="IPR000640">
    <property type="entry name" value="EFG_V-like"/>
</dbReference>
<dbReference type="InterPro" id="IPR031157">
    <property type="entry name" value="G_TR_CS"/>
</dbReference>
<dbReference type="InterPro" id="IPR027417">
    <property type="entry name" value="P-loop_NTPase"/>
</dbReference>
<dbReference type="InterPro" id="IPR020568">
    <property type="entry name" value="Ribosomal_Su5_D2-typ_SF"/>
</dbReference>
<dbReference type="InterPro" id="IPR014721">
    <property type="entry name" value="Ribsml_uS5_D2-typ_fold_subgr"/>
</dbReference>
<dbReference type="InterPro" id="IPR005225">
    <property type="entry name" value="Small_GTP-bd"/>
</dbReference>
<dbReference type="InterPro" id="IPR000795">
    <property type="entry name" value="T_Tr_GTP-bd_dom"/>
</dbReference>
<dbReference type="InterPro" id="IPR009000">
    <property type="entry name" value="Transl_B-barrel_sf"/>
</dbReference>
<dbReference type="InterPro" id="IPR004540">
    <property type="entry name" value="Transl_elong_EFG/EF2"/>
</dbReference>
<dbReference type="InterPro" id="IPR005517">
    <property type="entry name" value="Transl_elong_EFG/EF2_IV"/>
</dbReference>
<dbReference type="NCBIfam" id="TIGR00484">
    <property type="entry name" value="EF-G"/>
    <property type="match status" value="1"/>
</dbReference>
<dbReference type="NCBIfam" id="NF009381">
    <property type="entry name" value="PRK12740.1-5"/>
    <property type="match status" value="1"/>
</dbReference>
<dbReference type="NCBIfam" id="TIGR00231">
    <property type="entry name" value="small_GTP"/>
    <property type="match status" value="1"/>
</dbReference>
<dbReference type="PANTHER" id="PTHR43261:SF1">
    <property type="entry name" value="RIBOSOME-RELEASING FACTOR 2, MITOCHONDRIAL"/>
    <property type="match status" value="1"/>
</dbReference>
<dbReference type="PANTHER" id="PTHR43261">
    <property type="entry name" value="TRANSLATION ELONGATION FACTOR G-RELATED"/>
    <property type="match status" value="1"/>
</dbReference>
<dbReference type="Pfam" id="PF22042">
    <property type="entry name" value="EF-G_D2"/>
    <property type="match status" value="1"/>
</dbReference>
<dbReference type="Pfam" id="PF00679">
    <property type="entry name" value="EFG_C"/>
    <property type="match status" value="1"/>
</dbReference>
<dbReference type="Pfam" id="PF14492">
    <property type="entry name" value="EFG_III"/>
    <property type="match status" value="1"/>
</dbReference>
<dbReference type="Pfam" id="PF03764">
    <property type="entry name" value="EFG_IV"/>
    <property type="match status" value="1"/>
</dbReference>
<dbReference type="Pfam" id="PF00009">
    <property type="entry name" value="GTP_EFTU"/>
    <property type="match status" value="1"/>
</dbReference>
<dbReference type="PRINTS" id="PR00315">
    <property type="entry name" value="ELONGATNFCT"/>
</dbReference>
<dbReference type="SMART" id="SM00838">
    <property type="entry name" value="EFG_C"/>
    <property type="match status" value="1"/>
</dbReference>
<dbReference type="SMART" id="SM00889">
    <property type="entry name" value="EFG_IV"/>
    <property type="match status" value="1"/>
</dbReference>
<dbReference type="SUPFAM" id="SSF54980">
    <property type="entry name" value="EF-G C-terminal domain-like"/>
    <property type="match status" value="2"/>
</dbReference>
<dbReference type="SUPFAM" id="SSF52540">
    <property type="entry name" value="P-loop containing nucleoside triphosphate hydrolases"/>
    <property type="match status" value="1"/>
</dbReference>
<dbReference type="SUPFAM" id="SSF54211">
    <property type="entry name" value="Ribosomal protein S5 domain 2-like"/>
    <property type="match status" value="1"/>
</dbReference>
<dbReference type="SUPFAM" id="SSF50447">
    <property type="entry name" value="Translation proteins"/>
    <property type="match status" value="1"/>
</dbReference>
<dbReference type="PROSITE" id="PS00301">
    <property type="entry name" value="G_TR_1"/>
    <property type="match status" value="1"/>
</dbReference>
<dbReference type="PROSITE" id="PS51722">
    <property type="entry name" value="G_TR_2"/>
    <property type="match status" value="1"/>
</dbReference>
<comment type="function">
    <text evidence="1">Catalyzes the GTP-dependent ribosomal translocation step during translation elongation. During this step, the ribosome changes from the pre-translocational (PRE) to the post-translocational (POST) state as the newly formed A-site-bound peptidyl-tRNA and P-site-bound deacylated tRNA move to the P and E sites, respectively. Catalyzes the coordinated movement of the two tRNA molecules, the mRNA and conformational changes in the ribosome.</text>
</comment>
<comment type="subcellular location">
    <subcellularLocation>
        <location evidence="1">Cytoplasm</location>
    </subcellularLocation>
</comment>
<comment type="similarity">
    <text evidence="1">Belongs to the TRAFAC class translation factor GTPase superfamily. Classic translation factor GTPase family. EF-G/EF-2 subfamily.</text>
</comment>
<name>EFG_CAUVN</name>
<accession>B8H414</accession>
<protein>
    <recommendedName>
        <fullName evidence="1">Elongation factor G</fullName>
        <shortName evidence="1">EF-G</shortName>
    </recommendedName>
</protein>
<evidence type="ECO:0000255" key="1">
    <source>
        <dbReference type="HAMAP-Rule" id="MF_00054"/>
    </source>
</evidence>
<gene>
    <name evidence="1" type="primary">fusA</name>
    <name type="ordered locus">CCNA_03304</name>
</gene>